<comment type="function">
    <text evidence="1 4">Intrinsically disordered protein which may negatively regulate mTOR signaling pathway by stabilizing the mTOR complex component DEPTOR. Negatively regulates angiogenesis. Negatively regulates cell growth (By similarity). May play a role in neuronal development (PubMed:30080879).</text>
</comment>
<comment type="subcellular location">
    <subcellularLocation>
        <location evidence="1">Cell membrane</location>
        <topology evidence="1">Single-pass type IV membrane protein</topology>
    </subcellularLocation>
</comment>
<comment type="developmental stage">
    <text evidence="4">At 5 dpf, expressed in larvae brain and spinal cord.</text>
</comment>
<comment type="disruption phenotype">
    <text evidence="4">Mutant animals show no gross developmental abnormalities. They have enhanced fear-evoked freezing and compromised C-start responses. Mutant brains exhibit up-regulation of mTOR signaling.</text>
</comment>
<comment type="similarity">
    <text evidence="6">Belongs to the MINAR family.</text>
</comment>
<comment type="caution">
    <text evidence="1">MINAR1 topology is a matter of debate, some authors think the N-terminus is extracellular, while preliminary experimental results suggest a cytosolic location.</text>
</comment>
<name>MNAR1_DANRE</name>
<feature type="chain" id="PRO_0000445580" description="Major intrinsically disordered Notch2-binding receptor 1">
    <location>
        <begin position="1"/>
        <end position="897"/>
    </location>
</feature>
<feature type="topological domain" description="Cytoplasmic" evidence="6">
    <location>
        <begin position="1"/>
        <end position="872"/>
    </location>
</feature>
<feature type="transmembrane region" description="Helical" evidence="2">
    <location>
        <begin position="873"/>
        <end position="893"/>
    </location>
</feature>
<feature type="topological domain" description="Extracellular" evidence="6">
    <location>
        <begin position="894"/>
        <end position="897"/>
    </location>
</feature>
<feature type="region of interest" description="Disordered" evidence="3">
    <location>
        <begin position="405"/>
        <end position="433"/>
    </location>
</feature>
<feature type="region of interest" description="Disordered" evidence="3">
    <location>
        <begin position="450"/>
        <end position="502"/>
    </location>
</feature>
<feature type="region of interest" description="Disordered" evidence="3">
    <location>
        <begin position="688"/>
        <end position="766"/>
    </location>
</feature>
<feature type="compositionally biased region" description="Polar residues" evidence="3">
    <location>
        <begin position="411"/>
        <end position="423"/>
    </location>
</feature>
<feature type="compositionally biased region" description="Polar residues" evidence="3">
    <location>
        <begin position="452"/>
        <end position="471"/>
    </location>
</feature>
<feature type="compositionally biased region" description="Basic and acidic residues" evidence="3">
    <location>
        <begin position="472"/>
        <end position="498"/>
    </location>
</feature>
<feature type="compositionally biased region" description="Polar residues" evidence="3">
    <location>
        <begin position="697"/>
        <end position="724"/>
    </location>
</feature>
<feature type="compositionally biased region" description="Basic and acidic residues" evidence="3">
    <location>
        <begin position="725"/>
        <end position="756"/>
    </location>
</feature>
<protein>
    <recommendedName>
        <fullName>Major intrinsically disordered Notch2-binding receptor 1</fullName>
    </recommendedName>
    <alternativeName>
        <fullName>Membrane integral NOTCH2-associated receptor 1</fullName>
    </alternativeName>
    <alternativeName>
        <fullName evidence="5">Ubiquitination and mTOR signaling protein</fullName>
        <shortName evidence="5">ubtor</shortName>
    </alternativeName>
</protein>
<reference key="1">
    <citation type="journal article" date="2013" name="Nature">
        <title>The zebrafish reference genome sequence and its relationship to the human genome.</title>
        <authorList>
            <person name="Howe K."/>
            <person name="Clark M.D."/>
            <person name="Torroja C.F."/>
            <person name="Torrance J."/>
            <person name="Berthelot C."/>
            <person name="Muffato M."/>
            <person name="Collins J.E."/>
            <person name="Humphray S."/>
            <person name="McLaren K."/>
            <person name="Matthews L."/>
            <person name="McLaren S."/>
            <person name="Sealy I."/>
            <person name="Caccamo M."/>
            <person name="Churcher C."/>
            <person name="Scott C."/>
            <person name="Barrett J.C."/>
            <person name="Koch R."/>
            <person name="Rauch G.J."/>
            <person name="White S."/>
            <person name="Chow W."/>
            <person name="Kilian B."/>
            <person name="Quintais L.T."/>
            <person name="Guerra-Assuncao J.A."/>
            <person name="Zhou Y."/>
            <person name="Gu Y."/>
            <person name="Yen J."/>
            <person name="Vogel J.H."/>
            <person name="Eyre T."/>
            <person name="Redmond S."/>
            <person name="Banerjee R."/>
            <person name="Chi J."/>
            <person name="Fu B."/>
            <person name="Langley E."/>
            <person name="Maguire S.F."/>
            <person name="Laird G.K."/>
            <person name="Lloyd D."/>
            <person name="Kenyon E."/>
            <person name="Donaldson S."/>
            <person name="Sehra H."/>
            <person name="Almeida-King J."/>
            <person name="Loveland J."/>
            <person name="Trevanion S."/>
            <person name="Jones M."/>
            <person name="Quail M."/>
            <person name="Willey D."/>
            <person name="Hunt A."/>
            <person name="Burton J."/>
            <person name="Sims S."/>
            <person name="McLay K."/>
            <person name="Plumb B."/>
            <person name="Davis J."/>
            <person name="Clee C."/>
            <person name="Oliver K."/>
            <person name="Clark R."/>
            <person name="Riddle C."/>
            <person name="Elliot D."/>
            <person name="Threadgold G."/>
            <person name="Harden G."/>
            <person name="Ware D."/>
            <person name="Begum S."/>
            <person name="Mortimore B."/>
            <person name="Kerry G."/>
            <person name="Heath P."/>
            <person name="Phillimore B."/>
            <person name="Tracey A."/>
            <person name="Corby N."/>
            <person name="Dunn M."/>
            <person name="Johnson C."/>
            <person name="Wood J."/>
            <person name="Clark S."/>
            <person name="Pelan S."/>
            <person name="Griffiths G."/>
            <person name="Smith M."/>
            <person name="Glithero R."/>
            <person name="Howden P."/>
            <person name="Barker N."/>
            <person name="Lloyd C."/>
            <person name="Stevens C."/>
            <person name="Harley J."/>
            <person name="Holt K."/>
            <person name="Panagiotidis G."/>
            <person name="Lovell J."/>
            <person name="Beasley H."/>
            <person name="Henderson C."/>
            <person name="Gordon D."/>
            <person name="Auger K."/>
            <person name="Wright D."/>
            <person name="Collins J."/>
            <person name="Raisen C."/>
            <person name="Dyer L."/>
            <person name="Leung K."/>
            <person name="Robertson L."/>
            <person name="Ambridge K."/>
            <person name="Leongamornlert D."/>
            <person name="McGuire S."/>
            <person name="Gilderthorp R."/>
            <person name="Griffiths C."/>
            <person name="Manthravadi D."/>
            <person name="Nichol S."/>
            <person name="Barker G."/>
            <person name="Whitehead S."/>
            <person name="Kay M."/>
            <person name="Brown J."/>
            <person name="Murnane C."/>
            <person name="Gray E."/>
            <person name="Humphries M."/>
            <person name="Sycamore N."/>
            <person name="Barker D."/>
            <person name="Saunders D."/>
            <person name="Wallis J."/>
            <person name="Babbage A."/>
            <person name="Hammond S."/>
            <person name="Mashreghi-Mohammadi M."/>
            <person name="Barr L."/>
            <person name="Martin S."/>
            <person name="Wray P."/>
            <person name="Ellington A."/>
            <person name="Matthews N."/>
            <person name="Ellwood M."/>
            <person name="Woodmansey R."/>
            <person name="Clark G."/>
            <person name="Cooper J."/>
            <person name="Tromans A."/>
            <person name="Grafham D."/>
            <person name="Skuce C."/>
            <person name="Pandian R."/>
            <person name="Andrews R."/>
            <person name="Harrison E."/>
            <person name="Kimberley A."/>
            <person name="Garnett J."/>
            <person name="Fosker N."/>
            <person name="Hall R."/>
            <person name="Garner P."/>
            <person name="Kelly D."/>
            <person name="Bird C."/>
            <person name="Palmer S."/>
            <person name="Gehring I."/>
            <person name="Berger A."/>
            <person name="Dooley C.M."/>
            <person name="Ersan-Urun Z."/>
            <person name="Eser C."/>
            <person name="Geiger H."/>
            <person name="Geisler M."/>
            <person name="Karotki L."/>
            <person name="Kirn A."/>
            <person name="Konantz J."/>
            <person name="Konantz M."/>
            <person name="Oberlander M."/>
            <person name="Rudolph-Geiger S."/>
            <person name="Teucke M."/>
            <person name="Lanz C."/>
            <person name="Raddatz G."/>
            <person name="Osoegawa K."/>
            <person name="Zhu B."/>
            <person name="Rapp A."/>
            <person name="Widaa S."/>
            <person name="Langford C."/>
            <person name="Yang F."/>
            <person name="Schuster S.C."/>
            <person name="Carter N.P."/>
            <person name="Harrow J."/>
            <person name="Ning Z."/>
            <person name="Herrero J."/>
            <person name="Searle S.M."/>
            <person name="Enright A."/>
            <person name="Geisler R."/>
            <person name="Plasterk R.H."/>
            <person name="Lee C."/>
            <person name="Westerfield M."/>
            <person name="de Jong P.J."/>
            <person name="Zon L.I."/>
            <person name="Postlethwait J.H."/>
            <person name="Nusslein-Volhard C."/>
            <person name="Hubbard T.J."/>
            <person name="Roest Crollius H."/>
            <person name="Rogers J."/>
            <person name="Stemple D.L."/>
        </authorList>
    </citation>
    <scope>NUCLEOTIDE SEQUENCE [LARGE SCALE GENOMIC DNA]</scope>
    <source>
        <strain>Tuebingen</strain>
    </source>
</reference>
<reference key="2">
    <citation type="journal article" date="2018" name="PLoS Genet.">
        <title>UBTOR/KIAA1024 regulates neurite outgrowth and neoplasia through mTOR signaling.</title>
        <authorList>
            <person name="Zhang H."/>
            <person name="Zhang Q."/>
            <person name="Gao G."/>
            <person name="Wang X."/>
            <person name="Wang T."/>
            <person name="Kong Z."/>
            <person name="Wang G."/>
            <person name="Zhang C."/>
            <person name="Wang Y."/>
            <person name="Peng G."/>
        </authorList>
    </citation>
    <scope>FUNCTION</scope>
    <scope>DEVELOPMENTAL STAGE</scope>
    <scope>DISRUPTION PHENOTYPE</scope>
</reference>
<organism>
    <name type="scientific">Danio rerio</name>
    <name type="common">Zebrafish</name>
    <name type="synonym">Brachydanio rerio</name>
    <dbReference type="NCBI Taxonomy" id="7955"/>
    <lineage>
        <taxon>Eukaryota</taxon>
        <taxon>Metazoa</taxon>
        <taxon>Chordata</taxon>
        <taxon>Craniata</taxon>
        <taxon>Vertebrata</taxon>
        <taxon>Euteleostomi</taxon>
        <taxon>Actinopterygii</taxon>
        <taxon>Neopterygii</taxon>
        <taxon>Teleostei</taxon>
        <taxon>Ostariophysi</taxon>
        <taxon>Cypriniformes</taxon>
        <taxon>Danionidae</taxon>
        <taxon>Danioninae</taxon>
        <taxon>Danio</taxon>
    </lineage>
</organism>
<sequence>MDAMPEYSLFLVRILEELDTKYSTVSYQDLCKSLCARFDLVHLAKLRSLLFYTACLDPAFPATLFKDKMRCSVEDQQSKKLMVAADIVTMFNLIQMNGGMAKDKLPMGPRPKFHKNQSFESCRSDTDVYKYNDNDRAYKLLDTRGHHVSRNSPKSDCNSCQQFIPTSDPNFLLGVTKDLKCRAASLDKLQHLPQYASVSPPPCEMQSTYFPMDIDSESTTDQESLHANPGIKDVYVSSGEPFTVHSCVQKRNIFKEDFHNLVAFSPHVITTECRANPKSGGNYHHRRELSKPPTFFNHSFELPYSNPYFEPVNSPLQNKGRVKHESLDDLQASTYFGPTTVSECVSNRRTSSKHGRQPAWPVKSLSLNTEEGPDFERSFLNGKVPKDNHRHNIGTMENDQHFQCAKDKPTASPSGFSKKSNGSKTKDMSSVACGPGIEKREVGRRYKDKSINCPSFQSSNVDNGMSVGTQTEQHESRKVKDYPSQNKFKERPPFKHSEEDSEIVSDNISDIFRFLDDMSVCESLGVVQPSCYNSNGSLSQVTKSDGDSSPERNTIKIGKTGIKLDRLFQSLENSDDELKESVCKLVLRIGEIEKKLESLSGVRGEISQVLSKLTRLDEKIQEPEVNGKSSDGGLVEQIKTDANLSPHVFQCHTTGHNMKVEKSPEWCCSEADGSESLRVKALKKSVFTRRSSRSLNEENSATESKVASITNSPRDWRTVSYSSHNGEEGKERDRHSEGKERHRKSREAERQYEAHQGHRSSKPPKDSYLVEQVFSPHHFPPTVKTHVKGSPLYTDLRLTGHADGKRSQPSWTIEEYKRNSGDKNKLSALDLQVQESLNPNNLEYWMEDIYTPGYDSLLKRKEAEFRRAKACKIGALIFAAACTVILVIVVPICTMKS</sequence>
<gene>
    <name type="primary">minar1</name>
    <name evidence="5" type="synonym">ubtora</name>
    <name type="ORF">si:cabz01029535.1</name>
</gene>
<accession>A0A140LFM6</accession>
<proteinExistence type="evidence at transcript level"/>
<dbReference type="EMBL" id="CU184872">
    <property type="status" value="NOT_ANNOTATED_CDS"/>
    <property type="molecule type" value="Genomic_DNA"/>
</dbReference>
<dbReference type="RefSeq" id="NP_001410772.1">
    <property type="nucleotide sequence ID" value="NM_001423843.1"/>
</dbReference>
<dbReference type="RefSeq" id="XP_002667438.1">
    <property type="nucleotide sequence ID" value="XM_002667392.4"/>
</dbReference>
<dbReference type="SMR" id="A0A140LFM6"/>
<dbReference type="FunCoup" id="A0A140LFM6">
    <property type="interactions" value="1064"/>
</dbReference>
<dbReference type="STRING" id="7955.ENSDARP00000142049"/>
<dbReference type="PaxDb" id="7955-ENSDARP00000091495"/>
<dbReference type="GeneID" id="100331504"/>
<dbReference type="eggNOG" id="ENOG502QSCS">
    <property type="taxonomic scope" value="Eukaryota"/>
</dbReference>
<dbReference type="InParanoid" id="A0A140LFM6"/>
<dbReference type="OrthoDB" id="8875526at2759"/>
<dbReference type="PhylomeDB" id="A0A140LFM6"/>
<dbReference type="PRO" id="PR:A0A140LFM6"/>
<dbReference type="Proteomes" id="UP000000437">
    <property type="component" value="Chromosome 7"/>
</dbReference>
<dbReference type="GO" id="GO:0005886">
    <property type="term" value="C:plasma membrane"/>
    <property type="evidence" value="ECO:0000250"/>
    <property type="project" value="UniProtKB"/>
</dbReference>
<dbReference type="GO" id="GO:0030308">
    <property type="term" value="P:negative regulation of cell growth"/>
    <property type="evidence" value="ECO:0000250"/>
    <property type="project" value="UniProtKB"/>
</dbReference>
<dbReference type="GO" id="GO:0008285">
    <property type="term" value="P:negative regulation of cell population proliferation"/>
    <property type="evidence" value="ECO:0000318"/>
    <property type="project" value="GO_Central"/>
</dbReference>
<dbReference type="GO" id="GO:0010977">
    <property type="term" value="P:negative regulation of neuron projection development"/>
    <property type="evidence" value="ECO:0000250"/>
    <property type="project" value="UniProtKB"/>
</dbReference>
<dbReference type="GO" id="GO:0031397">
    <property type="term" value="P:negative regulation of protein ubiquitination"/>
    <property type="evidence" value="ECO:0000250"/>
    <property type="project" value="UniProtKB"/>
</dbReference>
<dbReference type="GO" id="GO:0032007">
    <property type="term" value="P:negative regulation of TOR signaling"/>
    <property type="evidence" value="ECO:0000250"/>
    <property type="project" value="UniProtKB"/>
</dbReference>
<dbReference type="InterPro" id="IPR039706">
    <property type="entry name" value="MINAR1-like"/>
</dbReference>
<dbReference type="InterPro" id="IPR009626">
    <property type="entry name" value="MINAR1-like_C"/>
</dbReference>
<dbReference type="InterPro" id="IPR055117">
    <property type="entry name" value="MINAR1_N"/>
</dbReference>
<dbReference type="PANTHER" id="PTHR31530:SF2">
    <property type="entry name" value="MAJOR INTRINSICALLY DISORDERED NOTCH2-BINDING RECEPTOR 1"/>
    <property type="match status" value="1"/>
</dbReference>
<dbReference type="PANTHER" id="PTHR31530">
    <property type="entry name" value="MAJOR INTRINSICALLY DISORDERED NOTCH2-BINDING RECEPTOR 1 MINAR1 FAMILY MEMBER"/>
    <property type="match status" value="1"/>
</dbReference>
<dbReference type="Pfam" id="PF06789">
    <property type="entry name" value="MINAR1_C"/>
    <property type="match status" value="1"/>
</dbReference>
<dbReference type="Pfam" id="PF22948">
    <property type="entry name" value="MINAR1_N"/>
    <property type="match status" value="1"/>
</dbReference>
<evidence type="ECO:0000250" key="1">
    <source>
        <dbReference type="UniProtKB" id="Q9UPX6"/>
    </source>
</evidence>
<evidence type="ECO:0000255" key="2"/>
<evidence type="ECO:0000256" key="3">
    <source>
        <dbReference type="SAM" id="MobiDB-lite"/>
    </source>
</evidence>
<evidence type="ECO:0000269" key="4">
    <source>
    </source>
</evidence>
<evidence type="ECO:0000303" key="5">
    <source>
    </source>
</evidence>
<evidence type="ECO:0000305" key="6"/>
<keyword id="KW-1003">Cell membrane</keyword>
<keyword id="KW-0472">Membrane</keyword>
<keyword id="KW-1185">Reference proteome</keyword>
<keyword id="KW-0812">Transmembrane</keyword>
<keyword id="KW-1133">Transmembrane helix</keyword>